<feature type="chain" id="PRO_0000072985" description="Glycine--tRNA ligase">
    <location>
        <begin position="1"/>
        <end position="451"/>
    </location>
</feature>
<feature type="binding site" evidence="1">
    <location>
        <position position="101"/>
    </location>
    <ligand>
        <name>substrate</name>
    </ligand>
</feature>
<feature type="binding site" evidence="1">
    <location>
        <position position="151"/>
    </location>
    <ligand>
        <name>substrate</name>
    </ligand>
</feature>
<feature type="binding site" evidence="1">
    <location>
        <begin position="183"/>
        <end position="185"/>
    </location>
    <ligand>
        <name>ATP</name>
        <dbReference type="ChEBI" id="CHEBI:30616"/>
    </ligand>
</feature>
<feature type="binding site" evidence="1">
    <location>
        <begin position="193"/>
        <end position="198"/>
    </location>
    <ligand>
        <name>ATP</name>
        <dbReference type="ChEBI" id="CHEBI:30616"/>
    </ligand>
</feature>
<feature type="binding site" evidence="1">
    <location>
        <begin position="198"/>
        <end position="202"/>
    </location>
    <ligand>
        <name>substrate</name>
    </ligand>
</feature>
<feature type="binding site" evidence="1">
    <location>
        <begin position="267"/>
        <end position="268"/>
    </location>
    <ligand>
        <name>ATP</name>
        <dbReference type="ChEBI" id="CHEBI:30616"/>
    </ligand>
</feature>
<feature type="binding site" evidence="1">
    <location>
        <begin position="308"/>
        <end position="312"/>
    </location>
    <ligand>
        <name>substrate</name>
    </ligand>
</feature>
<feature type="binding site" evidence="1">
    <location>
        <begin position="312"/>
        <end position="315"/>
    </location>
    <ligand>
        <name>ATP</name>
        <dbReference type="ChEBI" id="CHEBI:30616"/>
    </ligand>
</feature>
<protein>
    <recommendedName>
        <fullName evidence="1">Glycine--tRNA ligase</fullName>
        <ecNumber evidence="1">6.1.1.14</ecNumber>
    </recommendedName>
    <alternativeName>
        <fullName evidence="1">Glycyl-tRNA synthetase</fullName>
        <shortName evidence="1">GlyRS</shortName>
    </alternativeName>
</protein>
<gene>
    <name evidence="1" type="primary">glyQS</name>
    <name type="synonym">glyS</name>
    <name type="ordered locus">TDE_0020</name>
</gene>
<dbReference type="EC" id="6.1.1.14" evidence="1"/>
<dbReference type="EMBL" id="AE017226">
    <property type="protein sequence ID" value="AAS10518.1"/>
    <property type="molecule type" value="Genomic_DNA"/>
</dbReference>
<dbReference type="RefSeq" id="NP_970637.1">
    <property type="nucleotide sequence ID" value="NC_002967.9"/>
</dbReference>
<dbReference type="RefSeq" id="WP_002684564.1">
    <property type="nucleotide sequence ID" value="NC_002967.9"/>
</dbReference>
<dbReference type="SMR" id="Q73RR5"/>
<dbReference type="STRING" id="243275.TDE_0020"/>
<dbReference type="PaxDb" id="243275-TDE_0020"/>
<dbReference type="GeneID" id="2741635"/>
<dbReference type="KEGG" id="tde:TDE_0020"/>
<dbReference type="PATRIC" id="fig|243275.7.peg.22"/>
<dbReference type="eggNOG" id="COG0423">
    <property type="taxonomic scope" value="Bacteria"/>
</dbReference>
<dbReference type="HOGENOM" id="CLU_015515_2_1_12"/>
<dbReference type="OrthoDB" id="9760853at2"/>
<dbReference type="Proteomes" id="UP000008212">
    <property type="component" value="Chromosome"/>
</dbReference>
<dbReference type="GO" id="GO:0005737">
    <property type="term" value="C:cytoplasm"/>
    <property type="evidence" value="ECO:0007669"/>
    <property type="project" value="UniProtKB-SubCell"/>
</dbReference>
<dbReference type="GO" id="GO:0005524">
    <property type="term" value="F:ATP binding"/>
    <property type="evidence" value="ECO:0007669"/>
    <property type="project" value="UniProtKB-UniRule"/>
</dbReference>
<dbReference type="GO" id="GO:0004820">
    <property type="term" value="F:glycine-tRNA ligase activity"/>
    <property type="evidence" value="ECO:0000250"/>
    <property type="project" value="UniProtKB"/>
</dbReference>
<dbReference type="GO" id="GO:0046983">
    <property type="term" value="F:protein dimerization activity"/>
    <property type="evidence" value="ECO:0000250"/>
    <property type="project" value="UniProtKB"/>
</dbReference>
<dbReference type="GO" id="GO:0006426">
    <property type="term" value="P:glycyl-tRNA aminoacylation"/>
    <property type="evidence" value="ECO:0007669"/>
    <property type="project" value="UniProtKB-UniRule"/>
</dbReference>
<dbReference type="CDD" id="cd00774">
    <property type="entry name" value="GlyRS-like_core"/>
    <property type="match status" value="1"/>
</dbReference>
<dbReference type="CDD" id="cd00858">
    <property type="entry name" value="GlyRS_anticodon"/>
    <property type="match status" value="1"/>
</dbReference>
<dbReference type="FunFam" id="3.30.930.10:FF:000014">
    <property type="entry name" value="Glycine--tRNA ligase"/>
    <property type="match status" value="1"/>
</dbReference>
<dbReference type="FunFam" id="3.40.50.800:FF:000002">
    <property type="entry name" value="Glycine--tRNA ligase"/>
    <property type="match status" value="1"/>
</dbReference>
<dbReference type="Gene3D" id="3.40.50.800">
    <property type="entry name" value="Anticodon-binding domain"/>
    <property type="match status" value="1"/>
</dbReference>
<dbReference type="Gene3D" id="3.30.930.10">
    <property type="entry name" value="Bira Bifunctional Protein, Domain 2"/>
    <property type="match status" value="1"/>
</dbReference>
<dbReference type="HAMAP" id="MF_00253_B">
    <property type="entry name" value="Gly_tRNA_synth_B"/>
    <property type="match status" value="1"/>
</dbReference>
<dbReference type="InterPro" id="IPR002314">
    <property type="entry name" value="aa-tRNA-synt_IIb"/>
</dbReference>
<dbReference type="InterPro" id="IPR006195">
    <property type="entry name" value="aa-tRNA-synth_II"/>
</dbReference>
<dbReference type="InterPro" id="IPR045864">
    <property type="entry name" value="aa-tRNA-synth_II/BPL/LPL"/>
</dbReference>
<dbReference type="InterPro" id="IPR004154">
    <property type="entry name" value="Anticodon-bd"/>
</dbReference>
<dbReference type="InterPro" id="IPR036621">
    <property type="entry name" value="Anticodon-bd_dom_sf"/>
</dbReference>
<dbReference type="InterPro" id="IPR027031">
    <property type="entry name" value="Gly-tRNA_synthase/POLG2"/>
</dbReference>
<dbReference type="InterPro" id="IPR022961">
    <property type="entry name" value="Gly_tRNA_ligase_bac"/>
</dbReference>
<dbReference type="InterPro" id="IPR033731">
    <property type="entry name" value="GlyRS-like_core"/>
</dbReference>
<dbReference type="InterPro" id="IPR002315">
    <property type="entry name" value="tRNA-synt_gly"/>
</dbReference>
<dbReference type="NCBIfam" id="TIGR00389">
    <property type="entry name" value="glyS_dimeric"/>
    <property type="match status" value="1"/>
</dbReference>
<dbReference type="NCBIfam" id="NF003211">
    <property type="entry name" value="PRK04173.1"/>
    <property type="match status" value="1"/>
</dbReference>
<dbReference type="PANTHER" id="PTHR10745:SF8">
    <property type="entry name" value="DNA POLYMERASE SUBUNIT GAMMA-2, MITOCHONDRIAL"/>
    <property type="match status" value="1"/>
</dbReference>
<dbReference type="PANTHER" id="PTHR10745">
    <property type="entry name" value="GLYCYL-TRNA SYNTHETASE/DNA POLYMERASE SUBUNIT GAMMA-2"/>
    <property type="match status" value="1"/>
</dbReference>
<dbReference type="Pfam" id="PF03129">
    <property type="entry name" value="HGTP_anticodon"/>
    <property type="match status" value="1"/>
</dbReference>
<dbReference type="Pfam" id="PF00587">
    <property type="entry name" value="tRNA-synt_2b"/>
    <property type="match status" value="1"/>
</dbReference>
<dbReference type="PRINTS" id="PR01043">
    <property type="entry name" value="TRNASYNTHGLY"/>
</dbReference>
<dbReference type="SUPFAM" id="SSF52954">
    <property type="entry name" value="Class II aaRS ABD-related"/>
    <property type="match status" value="1"/>
</dbReference>
<dbReference type="SUPFAM" id="SSF55681">
    <property type="entry name" value="Class II aaRS and biotin synthetases"/>
    <property type="match status" value="1"/>
</dbReference>
<dbReference type="PROSITE" id="PS50862">
    <property type="entry name" value="AA_TRNA_LIGASE_II"/>
    <property type="match status" value="1"/>
</dbReference>
<accession>Q73RR5</accession>
<reference key="1">
    <citation type="journal article" date="2004" name="Proc. Natl. Acad. Sci. U.S.A.">
        <title>Comparison of the genome of the oral pathogen Treponema denticola with other spirochete genomes.</title>
        <authorList>
            <person name="Seshadri R."/>
            <person name="Myers G.S.A."/>
            <person name="Tettelin H."/>
            <person name="Eisen J.A."/>
            <person name="Heidelberg J.F."/>
            <person name="Dodson R.J."/>
            <person name="Davidsen T.M."/>
            <person name="DeBoy R.T."/>
            <person name="Fouts D.E."/>
            <person name="Haft D.H."/>
            <person name="Selengut J."/>
            <person name="Ren Q."/>
            <person name="Brinkac L.M."/>
            <person name="Madupu R."/>
            <person name="Kolonay J.F."/>
            <person name="Durkin S.A."/>
            <person name="Daugherty S.C."/>
            <person name="Shetty J."/>
            <person name="Shvartsbeyn A."/>
            <person name="Gebregeorgis E."/>
            <person name="Geer K."/>
            <person name="Tsegaye G."/>
            <person name="Malek J.A."/>
            <person name="Ayodeji B."/>
            <person name="Shatsman S."/>
            <person name="McLeod M.P."/>
            <person name="Smajs D."/>
            <person name="Howell J.K."/>
            <person name="Pal S."/>
            <person name="Amin A."/>
            <person name="Vashisth P."/>
            <person name="McNeill T.Z."/>
            <person name="Xiang Q."/>
            <person name="Sodergren E."/>
            <person name="Baca E."/>
            <person name="Weinstock G.M."/>
            <person name="Norris S.J."/>
            <person name="Fraser C.M."/>
            <person name="Paulsen I.T."/>
        </authorList>
    </citation>
    <scope>NUCLEOTIDE SEQUENCE [LARGE SCALE GENOMIC DNA]</scope>
    <source>
        <strain>ATCC 35405 / DSM 14222 / CIP 103919 / JCM 8153 / KCTC 15104</strain>
    </source>
</reference>
<comment type="function">
    <text evidence="1">Catalyzes the attachment of glycine to tRNA(Gly).</text>
</comment>
<comment type="catalytic activity">
    <reaction evidence="1">
        <text>tRNA(Gly) + glycine + ATP = glycyl-tRNA(Gly) + AMP + diphosphate</text>
        <dbReference type="Rhea" id="RHEA:16013"/>
        <dbReference type="Rhea" id="RHEA-COMP:9664"/>
        <dbReference type="Rhea" id="RHEA-COMP:9683"/>
        <dbReference type="ChEBI" id="CHEBI:30616"/>
        <dbReference type="ChEBI" id="CHEBI:33019"/>
        <dbReference type="ChEBI" id="CHEBI:57305"/>
        <dbReference type="ChEBI" id="CHEBI:78442"/>
        <dbReference type="ChEBI" id="CHEBI:78522"/>
        <dbReference type="ChEBI" id="CHEBI:456215"/>
        <dbReference type="EC" id="6.1.1.14"/>
    </reaction>
</comment>
<comment type="subunit">
    <text evidence="1">Homodimer.</text>
</comment>
<comment type="subcellular location">
    <subcellularLocation>
        <location evidence="1">Cytoplasm</location>
    </subcellularLocation>
</comment>
<comment type="similarity">
    <text evidence="1">Belongs to the class-II aminoacyl-tRNA synthetase family.</text>
</comment>
<organism>
    <name type="scientific">Treponema denticola (strain ATCC 35405 / DSM 14222 / CIP 103919 / JCM 8153 / KCTC 15104)</name>
    <dbReference type="NCBI Taxonomy" id="243275"/>
    <lineage>
        <taxon>Bacteria</taxon>
        <taxon>Pseudomonadati</taxon>
        <taxon>Spirochaetota</taxon>
        <taxon>Spirochaetia</taxon>
        <taxon>Spirochaetales</taxon>
        <taxon>Treponemataceae</taxon>
        <taxon>Treponema</taxon>
    </lineage>
</organism>
<keyword id="KW-0030">Aminoacyl-tRNA synthetase</keyword>
<keyword id="KW-0067">ATP-binding</keyword>
<keyword id="KW-0963">Cytoplasm</keyword>
<keyword id="KW-0436">Ligase</keyword>
<keyword id="KW-0547">Nucleotide-binding</keyword>
<keyword id="KW-0648">Protein biosynthesis</keyword>
<keyword id="KW-1185">Reference proteome</keyword>
<proteinExistence type="inferred from homology"/>
<name>SYG_TREDE</name>
<sequence length="451" mass="52933">MEDHKISMEKIVSLCKRRGFVFQSSEIYGGQNGAWDYGPLGIELKNNVSRAWWKEMTQLHDNIVGLDAAILMHPRTWEASGHVENFTDPLVDCKKCKSRFRADHLPPENLEKRVCPDCGGELTDTRKFNLMFKTHIGPTDDNSSVIYLRPETAQGIYVNYKNIIQSNRMKIPFGIAQIGKAFRNEIVTKNFIFRTCEFEQMEMQFFVKPGTDDEWFDYWKKQRWAFYEKYGVRTNKLQWHQHGKDELAHYAKDAYDIEYEFPMGFKELEGVHNRTNYDLTRHTEYSGKDMQYIDQDNGNEKYIPYIIETSAGLTRNVLMFICDAYDEEKVADKGNDDDWRTVLRFHPNIAPITVAVLPLMKKDGLAELAEEIRNELKEEFKTDYDQSGAIGKRYRRQDEVGTPFCVTVDYDSKEDNTVTLRFRDSMEQVRIPRTELISRIKTEIKNYKRAH</sequence>
<evidence type="ECO:0000255" key="1">
    <source>
        <dbReference type="HAMAP-Rule" id="MF_00253"/>
    </source>
</evidence>